<protein>
    <recommendedName>
        <fullName evidence="6">FHA domain-containing protein FHA2</fullName>
    </recommendedName>
    <alternativeName>
        <fullName evidence="5">Protein FORKHEAD-ASSOCIATED DOMAIN 2</fullName>
        <shortName evidence="5">AtFHA2</shortName>
    </alternativeName>
</protein>
<evidence type="ECO:0000255" key="1">
    <source>
        <dbReference type="PROSITE-ProRule" id="PRU00086"/>
    </source>
</evidence>
<evidence type="ECO:0000256" key="2">
    <source>
        <dbReference type="SAM" id="MobiDB-lite"/>
    </source>
</evidence>
<evidence type="ECO:0000269" key="3">
    <source>
    </source>
</evidence>
<evidence type="ECO:0000269" key="4">
    <source ref="4"/>
</evidence>
<evidence type="ECO:0000303" key="5">
    <source ref="4"/>
</evidence>
<evidence type="ECO:0000305" key="6"/>
<evidence type="ECO:0000312" key="7">
    <source>
        <dbReference type="Araport" id="AT3G07220"/>
    </source>
</evidence>
<evidence type="ECO:0000312" key="8">
    <source>
        <dbReference type="EMBL" id="AAF20224.1"/>
    </source>
</evidence>
<evidence type="ECO:0000312" key="9">
    <source>
        <dbReference type="Proteomes" id="UP000006548"/>
    </source>
</evidence>
<evidence type="ECO:0007744" key="10">
    <source>
    </source>
</evidence>
<reference key="1">
    <citation type="journal article" date="2000" name="Nature">
        <title>Sequence and analysis of chromosome 3 of the plant Arabidopsis thaliana.</title>
        <authorList>
            <person name="Salanoubat M."/>
            <person name="Lemcke K."/>
            <person name="Rieger M."/>
            <person name="Ansorge W."/>
            <person name="Unseld M."/>
            <person name="Fartmann B."/>
            <person name="Valle G."/>
            <person name="Bloecker H."/>
            <person name="Perez-Alonso M."/>
            <person name="Obermaier B."/>
            <person name="Delseny M."/>
            <person name="Boutry M."/>
            <person name="Grivell L.A."/>
            <person name="Mache R."/>
            <person name="Puigdomenech P."/>
            <person name="De Simone V."/>
            <person name="Choisne N."/>
            <person name="Artiguenave F."/>
            <person name="Robert C."/>
            <person name="Brottier P."/>
            <person name="Wincker P."/>
            <person name="Cattolico L."/>
            <person name="Weissenbach J."/>
            <person name="Saurin W."/>
            <person name="Quetier F."/>
            <person name="Schaefer M."/>
            <person name="Mueller-Auer S."/>
            <person name="Gabel C."/>
            <person name="Fuchs M."/>
            <person name="Benes V."/>
            <person name="Wurmbach E."/>
            <person name="Drzonek H."/>
            <person name="Erfle H."/>
            <person name="Jordan N."/>
            <person name="Bangert S."/>
            <person name="Wiedelmann R."/>
            <person name="Kranz H."/>
            <person name="Voss H."/>
            <person name="Holland R."/>
            <person name="Brandt P."/>
            <person name="Nyakatura G."/>
            <person name="Vezzi A."/>
            <person name="D'Angelo M."/>
            <person name="Pallavicini A."/>
            <person name="Toppo S."/>
            <person name="Simionati B."/>
            <person name="Conrad A."/>
            <person name="Hornischer K."/>
            <person name="Kauer G."/>
            <person name="Loehnert T.-H."/>
            <person name="Nordsiek G."/>
            <person name="Reichelt J."/>
            <person name="Scharfe M."/>
            <person name="Schoen O."/>
            <person name="Bargues M."/>
            <person name="Terol J."/>
            <person name="Climent J."/>
            <person name="Navarro P."/>
            <person name="Collado C."/>
            <person name="Perez-Perez A."/>
            <person name="Ottenwaelder B."/>
            <person name="Duchemin D."/>
            <person name="Cooke R."/>
            <person name="Laudie M."/>
            <person name="Berger-Llauro C."/>
            <person name="Purnelle B."/>
            <person name="Masuy D."/>
            <person name="de Haan M."/>
            <person name="Maarse A.C."/>
            <person name="Alcaraz J.-P."/>
            <person name="Cottet A."/>
            <person name="Casacuberta E."/>
            <person name="Monfort A."/>
            <person name="Argiriou A."/>
            <person name="Flores M."/>
            <person name="Liguori R."/>
            <person name="Vitale D."/>
            <person name="Mannhaupt G."/>
            <person name="Haase D."/>
            <person name="Schoof H."/>
            <person name="Rudd S."/>
            <person name="Zaccaria P."/>
            <person name="Mewes H.-W."/>
            <person name="Mayer K.F.X."/>
            <person name="Kaul S."/>
            <person name="Town C.D."/>
            <person name="Koo H.L."/>
            <person name="Tallon L.J."/>
            <person name="Jenkins J."/>
            <person name="Rooney T."/>
            <person name="Rizzo M."/>
            <person name="Walts A."/>
            <person name="Utterback T."/>
            <person name="Fujii C.Y."/>
            <person name="Shea T.P."/>
            <person name="Creasy T.H."/>
            <person name="Haas B."/>
            <person name="Maiti R."/>
            <person name="Wu D."/>
            <person name="Peterson J."/>
            <person name="Van Aken S."/>
            <person name="Pai G."/>
            <person name="Militscher J."/>
            <person name="Sellers P."/>
            <person name="Gill J.E."/>
            <person name="Feldblyum T.V."/>
            <person name="Preuss D."/>
            <person name="Lin X."/>
            <person name="Nierman W.C."/>
            <person name="Salzberg S.L."/>
            <person name="White O."/>
            <person name="Venter J.C."/>
            <person name="Fraser C.M."/>
            <person name="Kaneko T."/>
            <person name="Nakamura Y."/>
            <person name="Sato S."/>
            <person name="Kato T."/>
            <person name="Asamizu E."/>
            <person name="Sasamoto S."/>
            <person name="Kimura T."/>
            <person name="Idesawa K."/>
            <person name="Kawashima K."/>
            <person name="Kishida Y."/>
            <person name="Kiyokawa C."/>
            <person name="Kohara M."/>
            <person name="Matsumoto M."/>
            <person name="Matsuno A."/>
            <person name="Muraki A."/>
            <person name="Nakayama S."/>
            <person name="Nakazaki N."/>
            <person name="Shinpo S."/>
            <person name="Takeuchi C."/>
            <person name="Wada T."/>
            <person name="Watanabe A."/>
            <person name="Yamada M."/>
            <person name="Yasuda M."/>
            <person name="Tabata S."/>
        </authorList>
    </citation>
    <scope>NUCLEOTIDE SEQUENCE [LARGE SCALE GENOMIC DNA]</scope>
    <source>
        <strain>cv. Columbia</strain>
    </source>
</reference>
<reference key="2">
    <citation type="journal article" date="2017" name="Plant J.">
        <title>Araport11: a complete reannotation of the Arabidopsis thaliana reference genome.</title>
        <authorList>
            <person name="Cheng C.Y."/>
            <person name="Krishnakumar V."/>
            <person name="Chan A.P."/>
            <person name="Thibaud-Nissen F."/>
            <person name="Schobel S."/>
            <person name="Town C.D."/>
        </authorList>
    </citation>
    <scope>GENOME REANNOTATION</scope>
    <source>
        <strain>cv. Columbia</strain>
    </source>
</reference>
<reference key="3">
    <citation type="journal article" date="2002" name="Science">
        <title>Functional annotation of a full-length Arabidopsis cDNA collection.</title>
        <authorList>
            <person name="Seki M."/>
            <person name="Narusaka M."/>
            <person name="Kamiya A."/>
            <person name="Ishida J."/>
            <person name="Satou M."/>
            <person name="Sakurai T."/>
            <person name="Nakajima M."/>
            <person name="Enju A."/>
            <person name="Akiyama K."/>
            <person name="Oono Y."/>
            <person name="Muramatsu M."/>
            <person name="Hayashizaki Y."/>
            <person name="Kawai J."/>
            <person name="Carninci P."/>
            <person name="Itoh M."/>
            <person name="Ishii Y."/>
            <person name="Arakawa T."/>
            <person name="Shibata K."/>
            <person name="Shinagawa A."/>
            <person name="Shinozaki K."/>
        </authorList>
    </citation>
    <scope>NUCLEOTIDE SEQUENCE [LARGE SCALE MRNA]</scope>
    <source>
        <strain>cv. Columbia</strain>
    </source>
</reference>
<reference key="4">
    <citation type="journal article" date="2003" name="Plant Sci.">
        <title>Molecular characteristics and differential expression of two nuclear factors containing the FHA domain in Arabidopsis.</title>
        <authorList>
            <person name="Ahn J.-W."/>
            <person name="Kim M."/>
            <person name="Bang J.-W."/>
            <person name="Pai H.-S."/>
        </authorList>
    </citation>
    <scope>SUBCELLULAR LOCATION</scope>
    <scope>TISSUE SPECIFICITY</scope>
</reference>
<reference key="5">
    <citation type="journal article" date="2012" name="Mol. Cell. Proteomics">
        <title>Comparative large-scale characterisation of plant vs. mammal proteins reveals similar and idiosyncratic N-alpha acetylation features.</title>
        <authorList>
            <person name="Bienvenut W.V."/>
            <person name="Sumpton D."/>
            <person name="Martinez A."/>
            <person name="Lilla S."/>
            <person name="Espagne C."/>
            <person name="Meinnel T."/>
            <person name="Giglione C."/>
        </authorList>
    </citation>
    <scope>ACETYLATION [LARGE SCALE ANALYSIS] AT ALA-2</scope>
    <scope>CLEAVAGE OF INITIATOR METHIONINE [LARGE SCALE ANALYSIS]</scope>
    <scope>IDENTIFICATION BY MASS SPECTROMETRY [LARGE SCALE ANALYSIS]</scope>
</reference>
<reference key="6">
    <citation type="journal article" date="2013" name="Planta">
        <title>The forkhead-associated domain 2 (FHA2) in Arabidopsis plays a role in plant fertility by regulating stamen development.</title>
        <authorList>
            <person name="Ahn E.R."/>
            <person name="Cho H.K."/>
            <person name="Pai H.S."/>
        </authorList>
    </citation>
    <scope>FUNCTION</scope>
    <scope>SUBCELLULAR LOCATION</scope>
    <scope>DISRUPTION PHENOTYPE</scope>
</reference>
<gene>
    <name evidence="5" type="primary">FHA2</name>
    <name evidence="7" type="ordered locus">At3g07220</name>
    <name evidence="8" type="ORF">T1B9.11</name>
</gene>
<name>FHA2_ARATH</name>
<accession>Q9SFV2</accession>
<accession>Q8GXA6</accession>
<feature type="initiator methionine" description="Removed" evidence="10">
    <location>
        <position position="1"/>
    </location>
</feature>
<feature type="chain" id="PRO_0000433004" description="FHA domain-containing protein FHA2">
    <location>
        <begin position="2"/>
        <end position="320"/>
    </location>
</feature>
<feature type="domain" description="FHA" evidence="1">
    <location>
        <begin position="32"/>
        <end position="89"/>
    </location>
</feature>
<feature type="region of interest" description="Disordered" evidence="2">
    <location>
        <begin position="138"/>
        <end position="211"/>
    </location>
</feature>
<feature type="compositionally biased region" description="Acidic residues" evidence="2">
    <location>
        <begin position="163"/>
        <end position="178"/>
    </location>
</feature>
<feature type="compositionally biased region" description="Basic and acidic residues" evidence="2">
    <location>
        <begin position="198"/>
        <end position="210"/>
    </location>
</feature>
<feature type="modified residue" description="N-acetylalanine" evidence="10">
    <location>
        <position position="2"/>
    </location>
</feature>
<feature type="sequence conflict" description="In Ref. 3; BAC42952." evidence="6" ref="3">
    <original>N</original>
    <variation>S</variation>
    <location>
        <position position="55"/>
    </location>
</feature>
<comment type="function">
    <text evidence="3">May play a role in the control of plant organ development and specifically in the regulation of stamen development. Does not show transactivation activity in yeast.</text>
</comment>
<comment type="interaction">
    <interactant intactId="EBI-15191747">
        <id>Q9SFV2</id>
    </interactant>
    <interactant intactId="EBI-15191973">
        <id>C0SUU6</id>
        <label>At1g11510</label>
    </interactant>
    <organismsDiffer>false</organismsDiffer>
    <experiments>3</experiments>
</comment>
<comment type="interaction">
    <interactant intactId="EBI-15191747">
        <id>Q9SFV2</id>
    </interactant>
    <interactant intactId="EBI-15195363">
        <id>Q93XW7</id>
        <label>At3g21810</label>
    </interactant>
    <organismsDiffer>false</organismsDiffer>
    <experiments>3</experiments>
</comment>
<comment type="interaction">
    <interactant intactId="EBI-15191747">
        <id>Q9SFV2</id>
    </interactant>
    <interactant intactId="EBI-15192535">
        <id>F4JI72</id>
        <label>At4g03250</label>
    </interactant>
    <organismsDiffer>false</organismsDiffer>
    <experiments>3</experiments>
</comment>
<comment type="interaction">
    <interactant intactId="EBI-15191747">
        <id>Q9SFV2</id>
    </interactant>
    <interactant intactId="EBI-15191815">
        <id>O22763-3</id>
        <label>BZIP10</label>
    </interactant>
    <organismsDiffer>false</organismsDiffer>
    <experiments>3</experiments>
</comment>
<comment type="interaction">
    <interactant intactId="EBI-15191747">
        <id>Q9SFV2</id>
    </interactant>
    <interactant intactId="EBI-1571089">
        <id>O80450</id>
        <label>GT-3B</label>
    </interactant>
    <organismsDiffer>false</organismsDiffer>
    <experiments>3</experiments>
</comment>
<comment type="interaction">
    <interactant intactId="EBI-15191747">
        <id>Q9SFV2</id>
    </interactant>
    <interactant intactId="EBI-15192813">
        <id>Q9FDW1</id>
        <label>MYB44</label>
    </interactant>
    <organismsDiffer>false</organismsDiffer>
    <experiments>3</experiments>
</comment>
<comment type="interaction">
    <interactant intactId="EBI-15191747">
        <id>Q9SFV2</id>
    </interactant>
    <interactant intactId="EBI-1998502">
        <id>O04017</id>
        <label>NAC098</label>
    </interactant>
    <organismsDiffer>false</organismsDiffer>
    <experiments>3</experiments>
</comment>
<comment type="subcellular location">
    <subcellularLocation>
        <location evidence="3 4">Nucleus</location>
    </subcellularLocation>
    <text evidence="3">Detected at discrete loci in the nucleus.</text>
</comment>
<comment type="tissue specificity">
    <text evidence="4">Widely expressed.</text>
</comment>
<comment type="disruption phenotype">
    <text evidence="3">Slightly enlarged leaves, small siliques with few seed set, severely reduced fertility mainly due to reduced stamen filament elongation and defects in pollen development. Increased polyploidy levels in cotyledon and leaf cells.</text>
</comment>
<sequence length="320" mass="35993">MATAVGGGSDVEVGFAKLQGEDFEYYMQSYSIILGRNSKKATVDVDLSSLGGGMNISRNHARIFYDFTRRRFSLEVLGKNGCLVEGVLHLPGNPNVKLDSQDLLQIGDKEFYFLLPVRSILGGPLGPRHHVSGQTSVVPYHNYQSGPGSGSGKKGVRSRELYEYDDEDDDDDDDEEDDMRGSGKKTRRDGHEVVYASGEKKREGRSKVDREADDQQFLQLEEKDVVSSVATVLSDLCGPGEWMPMEKLHSVILKEYGNVWHHSRVRRYLSQEDWAIPEAKGKPWYGLLMLLRKYPEHFVINTRSKGRVTLEFVSLVTLLS</sequence>
<dbReference type="EMBL" id="AC012395">
    <property type="protein sequence ID" value="AAF20224.1"/>
    <property type="molecule type" value="Genomic_DNA"/>
</dbReference>
<dbReference type="EMBL" id="CP002686">
    <property type="protein sequence ID" value="AEE74516.1"/>
    <property type="molecule type" value="Genomic_DNA"/>
</dbReference>
<dbReference type="EMBL" id="AK118338">
    <property type="protein sequence ID" value="BAC42952.1"/>
    <property type="molecule type" value="mRNA"/>
</dbReference>
<dbReference type="RefSeq" id="NP_187378.1">
    <property type="nucleotide sequence ID" value="NM_111602.4"/>
</dbReference>
<dbReference type="SMR" id="Q9SFV2"/>
<dbReference type="FunCoup" id="Q9SFV2">
    <property type="interactions" value="1340"/>
</dbReference>
<dbReference type="IntAct" id="Q9SFV2">
    <property type="interactions" value="67"/>
</dbReference>
<dbReference type="STRING" id="3702.Q9SFV2"/>
<dbReference type="iPTMnet" id="Q9SFV2"/>
<dbReference type="PaxDb" id="3702-AT3G07220.1"/>
<dbReference type="ProteomicsDB" id="230577"/>
<dbReference type="EnsemblPlants" id="AT3G07220.1">
    <property type="protein sequence ID" value="AT3G07220.1"/>
    <property type="gene ID" value="AT3G07220"/>
</dbReference>
<dbReference type="GeneID" id="819910"/>
<dbReference type="Gramene" id="AT3G07220.1">
    <property type="protein sequence ID" value="AT3G07220.1"/>
    <property type="gene ID" value="AT3G07220"/>
</dbReference>
<dbReference type="KEGG" id="ath:AT3G07220"/>
<dbReference type="Araport" id="AT3G07220"/>
<dbReference type="TAIR" id="AT3G07220">
    <property type="gene designation" value="FHA2"/>
</dbReference>
<dbReference type="eggNOG" id="KOG2294">
    <property type="taxonomic scope" value="Eukaryota"/>
</dbReference>
<dbReference type="HOGENOM" id="CLU_068161_0_0_1"/>
<dbReference type="InParanoid" id="Q9SFV2"/>
<dbReference type="OMA" id="EDWTGPE"/>
<dbReference type="OrthoDB" id="691130at2759"/>
<dbReference type="PhylomeDB" id="Q9SFV2"/>
<dbReference type="PRO" id="PR:Q9SFV2"/>
<dbReference type="Proteomes" id="UP000006548">
    <property type="component" value="Chromosome 3"/>
</dbReference>
<dbReference type="ExpressionAtlas" id="Q9SFV2">
    <property type="expression patterns" value="baseline and differential"/>
</dbReference>
<dbReference type="GO" id="GO:0016587">
    <property type="term" value="C:Isw1 complex"/>
    <property type="evidence" value="ECO:0000353"/>
    <property type="project" value="TAIR"/>
</dbReference>
<dbReference type="GO" id="GO:0005634">
    <property type="term" value="C:nucleus"/>
    <property type="evidence" value="ECO:0000314"/>
    <property type="project" value="UniProtKB"/>
</dbReference>
<dbReference type="GO" id="GO:0042393">
    <property type="term" value="F:histone binding"/>
    <property type="evidence" value="ECO:0000314"/>
    <property type="project" value="TAIR"/>
</dbReference>
<dbReference type="GO" id="GO:0006338">
    <property type="term" value="P:chromatin remodeling"/>
    <property type="evidence" value="ECO:0000353"/>
    <property type="project" value="TAIR"/>
</dbReference>
<dbReference type="GO" id="GO:0048638">
    <property type="term" value="P:regulation of developmental growth"/>
    <property type="evidence" value="ECO:0000315"/>
    <property type="project" value="UniProtKB"/>
</dbReference>
<dbReference type="GO" id="GO:0060962">
    <property type="term" value="P:regulation of ribosomal protein gene transcription by RNA polymerase II"/>
    <property type="evidence" value="ECO:0007669"/>
    <property type="project" value="InterPro"/>
</dbReference>
<dbReference type="GO" id="GO:0080086">
    <property type="term" value="P:stamen filament development"/>
    <property type="evidence" value="ECO:0000315"/>
    <property type="project" value="UniProtKB"/>
</dbReference>
<dbReference type="CDD" id="cd22701">
    <property type="entry name" value="FHA_FKH1-like"/>
    <property type="match status" value="1"/>
</dbReference>
<dbReference type="FunFam" id="2.60.200.20:FF:000014">
    <property type="entry name" value="FHA domain-containing protein FHA2"/>
    <property type="match status" value="1"/>
</dbReference>
<dbReference type="Gene3D" id="2.60.200.20">
    <property type="match status" value="1"/>
</dbReference>
<dbReference type="InterPro" id="IPR000253">
    <property type="entry name" value="FHA_dom"/>
</dbReference>
<dbReference type="InterPro" id="IPR045178">
    <property type="entry name" value="Fhl1/FHA1"/>
</dbReference>
<dbReference type="InterPro" id="IPR008984">
    <property type="entry name" value="SMAD_FHA_dom_sf"/>
</dbReference>
<dbReference type="PANTHER" id="PTHR21712">
    <property type="entry name" value="PRE-RRNA-PROCESSING PROTEIN FHL1"/>
    <property type="match status" value="1"/>
</dbReference>
<dbReference type="PANTHER" id="PTHR21712:SF29">
    <property type="entry name" value="PRE-RRNA-PROCESSING PROTEIN FHL1"/>
    <property type="match status" value="1"/>
</dbReference>
<dbReference type="Pfam" id="PF00498">
    <property type="entry name" value="FHA"/>
    <property type="match status" value="1"/>
</dbReference>
<dbReference type="SMART" id="SM00240">
    <property type="entry name" value="FHA"/>
    <property type="match status" value="1"/>
</dbReference>
<dbReference type="SUPFAM" id="SSF49879">
    <property type="entry name" value="SMAD/FHA domain"/>
    <property type="match status" value="1"/>
</dbReference>
<dbReference type="PROSITE" id="PS50006">
    <property type="entry name" value="FHA_DOMAIN"/>
    <property type="match status" value="1"/>
</dbReference>
<proteinExistence type="evidence at protein level"/>
<keyword id="KW-0007">Acetylation</keyword>
<keyword id="KW-0217">Developmental protein</keyword>
<keyword id="KW-0539">Nucleus</keyword>
<keyword id="KW-1185">Reference proteome</keyword>
<organism evidence="9">
    <name type="scientific">Arabidopsis thaliana</name>
    <name type="common">Mouse-ear cress</name>
    <dbReference type="NCBI Taxonomy" id="3702"/>
    <lineage>
        <taxon>Eukaryota</taxon>
        <taxon>Viridiplantae</taxon>
        <taxon>Streptophyta</taxon>
        <taxon>Embryophyta</taxon>
        <taxon>Tracheophyta</taxon>
        <taxon>Spermatophyta</taxon>
        <taxon>Magnoliopsida</taxon>
        <taxon>eudicotyledons</taxon>
        <taxon>Gunneridae</taxon>
        <taxon>Pentapetalae</taxon>
        <taxon>rosids</taxon>
        <taxon>malvids</taxon>
        <taxon>Brassicales</taxon>
        <taxon>Brassicaceae</taxon>
        <taxon>Camelineae</taxon>
        <taxon>Arabidopsis</taxon>
    </lineage>
</organism>